<sequence>MGLSFFSKHLPIQEGQPWASKTPADIISTVEFNHTGELLATGDKGGRVVIFQREPESKNAPHSQGEYDVYSTFQSHEPEFDYLKSLEIEEKINKIKWLPQQNAAHSLLSTNDKTIKLWKITERDKRPEGYNLKDEEGKLKDLSTVTSLQVPVLKPMDLMVEVSPRRIFANGHTYHINSISVNSDCETYMSADDLRINLWHLAITDRSFNIVDIKPANMEDLTEVITASEFHPHHCNLFVYSSSKGSLRLCDMRAAALCDKHSKLFEEPEDPSNRSFFSEIISSVSDVKFSHSGRYMLTRDYLTVKVWDLNMEARPIETYQVHDYLRSKLCSLYENDCIFDKFECAWNGSDSVIMTGAYNNFFRMFDRNTKRDVTLEASRESSKPRAVLKPRRVCVGGKRRRDDISVDSLDFTKKILHTAWHPAENIIAIAATNNLYIFQDKVNSDMH</sequence>
<proteinExistence type="evidence at transcript level"/>
<keyword id="KW-1185">Reference proteome</keyword>
<keyword id="KW-0677">Repeat</keyword>
<keyword id="KW-0853">WD repeat</keyword>
<evidence type="ECO:0000250" key="1"/>
<evidence type="ECO:0000250" key="2">
    <source>
        <dbReference type="UniProtKB" id="Q9Y2T4"/>
    </source>
</evidence>
<evidence type="ECO:0000305" key="3"/>
<accession>Q95LP0</accession>
<organism>
    <name type="scientific">Macaca fascicularis</name>
    <name type="common">Crab-eating macaque</name>
    <name type="synonym">Cynomolgus monkey</name>
    <dbReference type="NCBI Taxonomy" id="9541"/>
    <lineage>
        <taxon>Eukaryota</taxon>
        <taxon>Metazoa</taxon>
        <taxon>Chordata</taxon>
        <taxon>Craniata</taxon>
        <taxon>Vertebrata</taxon>
        <taxon>Euteleostomi</taxon>
        <taxon>Mammalia</taxon>
        <taxon>Eutheria</taxon>
        <taxon>Euarchontoglires</taxon>
        <taxon>Primates</taxon>
        <taxon>Haplorrhini</taxon>
        <taxon>Catarrhini</taxon>
        <taxon>Cercopithecidae</taxon>
        <taxon>Cercopithecinae</taxon>
        <taxon>Macaca</taxon>
    </lineage>
</organism>
<protein>
    <recommendedName>
        <fullName>Serine/threonine-protein phosphatase 2A 55 kDa regulatory subunit B gamma isoform</fullName>
    </recommendedName>
    <alternativeName>
        <fullName>PP2A subunit B isoform B55-gamma</fullName>
    </alternativeName>
    <alternativeName>
        <fullName>PP2A subunit B isoform PR55-gamma</fullName>
    </alternativeName>
    <alternativeName>
        <fullName>PP2A subunit B isoform R2-gamma</fullName>
    </alternativeName>
    <alternativeName>
        <fullName>PP2A subunit B isoform gamma</fullName>
    </alternativeName>
</protein>
<feature type="chain" id="PRO_0000071429" description="Serine/threonine-protein phosphatase 2A 55 kDa regulatory subunit B gamma isoform">
    <location>
        <begin position="1"/>
        <end position="447"/>
    </location>
</feature>
<feature type="repeat" description="WD 1">
    <location>
        <begin position="22"/>
        <end position="61"/>
    </location>
</feature>
<feature type="repeat" description="WD 2">
    <location>
        <begin position="87"/>
        <end position="128"/>
    </location>
</feature>
<feature type="repeat" description="WD 3">
    <location>
        <begin position="171"/>
        <end position="209"/>
    </location>
</feature>
<feature type="repeat" description="WD 4">
    <location>
        <begin position="220"/>
        <end position="260"/>
    </location>
</feature>
<feature type="repeat" description="WD 5">
    <location>
        <begin position="279"/>
        <end position="317"/>
    </location>
</feature>
<feature type="repeat" description="WD 6">
    <location>
        <begin position="334"/>
        <end position="375"/>
    </location>
</feature>
<feature type="repeat" description="WD 7">
    <location>
        <begin position="410"/>
        <end position="446"/>
    </location>
</feature>
<gene>
    <name type="primary">PPP2R2C</name>
    <name type="ORF">QtsA-16028</name>
</gene>
<name>2ABG_MACFA</name>
<dbReference type="EMBL" id="AB072748">
    <property type="protein sequence ID" value="BAB69717.1"/>
    <property type="molecule type" value="mRNA"/>
</dbReference>
<dbReference type="SMR" id="Q95LP0"/>
<dbReference type="STRING" id="9541.ENSMFAP00000008920"/>
<dbReference type="VEuPathDB" id="HostDB:ENSMFAG00000000990"/>
<dbReference type="eggNOG" id="KOG1354">
    <property type="taxonomic scope" value="Eukaryota"/>
</dbReference>
<dbReference type="Proteomes" id="UP000233100">
    <property type="component" value="Chromosome 5"/>
</dbReference>
<dbReference type="GO" id="GO:0000159">
    <property type="term" value="C:protein phosphatase type 2A complex"/>
    <property type="evidence" value="ECO:0007669"/>
    <property type="project" value="InterPro"/>
</dbReference>
<dbReference type="GO" id="GO:0019888">
    <property type="term" value="F:protein phosphatase regulator activity"/>
    <property type="evidence" value="ECO:0007669"/>
    <property type="project" value="InterPro"/>
</dbReference>
<dbReference type="FunFam" id="2.130.10.10:FF:000002">
    <property type="entry name" value="Serine/threonine-protein phosphatase 2A 55 kDa regulatory subunit B"/>
    <property type="match status" value="1"/>
</dbReference>
<dbReference type="Gene3D" id="2.130.10.10">
    <property type="entry name" value="YVTN repeat-like/Quinoprotein amine dehydrogenase"/>
    <property type="match status" value="1"/>
</dbReference>
<dbReference type="InterPro" id="IPR000009">
    <property type="entry name" value="PP2A_PR55"/>
</dbReference>
<dbReference type="InterPro" id="IPR018067">
    <property type="entry name" value="PP2A_PR55_CS"/>
</dbReference>
<dbReference type="InterPro" id="IPR015943">
    <property type="entry name" value="WD40/YVTN_repeat-like_dom_sf"/>
</dbReference>
<dbReference type="InterPro" id="IPR036322">
    <property type="entry name" value="WD40_repeat_dom_sf"/>
</dbReference>
<dbReference type="InterPro" id="IPR001680">
    <property type="entry name" value="WD40_rpt"/>
</dbReference>
<dbReference type="PANTHER" id="PTHR11871">
    <property type="entry name" value="PROTEIN PHOSPHATASE PP2A REGULATORY SUBUNIT B"/>
    <property type="match status" value="1"/>
</dbReference>
<dbReference type="PIRSF" id="PIRSF037309">
    <property type="entry name" value="PP2A_PR55"/>
    <property type="match status" value="1"/>
</dbReference>
<dbReference type="PRINTS" id="PR00600">
    <property type="entry name" value="PP2APR55"/>
</dbReference>
<dbReference type="SMART" id="SM00320">
    <property type="entry name" value="WD40"/>
    <property type="match status" value="6"/>
</dbReference>
<dbReference type="SUPFAM" id="SSF50978">
    <property type="entry name" value="WD40 repeat-like"/>
    <property type="match status" value="1"/>
</dbReference>
<dbReference type="PROSITE" id="PS01024">
    <property type="entry name" value="PR55_1"/>
    <property type="match status" value="1"/>
</dbReference>
<dbReference type="PROSITE" id="PS01025">
    <property type="entry name" value="PR55_2"/>
    <property type="match status" value="1"/>
</dbReference>
<comment type="function">
    <text evidence="1">The B regulatory subunit might modulate substrate selectivity and catalytic activity, and might also direct the localization of the catalytic enzyme to a particular subcellular compartment.</text>
</comment>
<comment type="subunit">
    <text evidence="1 2">PP2A consists of a common heterodimeric core enzyme, composed of a 36 kDa catalytic subunit (subunit C) and a 65 kDa constant regulatory subunit (PR65 or subunit A), that associates with a variety of regulatory subunits. Proteins that associate with the core dimer include three families of regulatory subunits B (the R2/B/PR55/B55, R3/B''/PR72/PR130/PR59 and R5/B'/B56 families), the 48 kDa variable regulatory subunit, viral proteins, and cell signaling molecules (By similarity). Interacts with IER5 (By similarity).</text>
</comment>
<comment type="similarity">
    <text evidence="3">Belongs to the phosphatase 2A regulatory subunit B family.</text>
</comment>
<reference key="1">
    <citation type="journal article" date="2002" name="BMC Genomics">
        <title>Cynomolgus monkey testicular cDNAs for discovery of novel human genes in the human genome sequence.</title>
        <authorList>
            <person name="Osada N."/>
            <person name="Hida M."/>
            <person name="Kusuda J."/>
            <person name="Tanuma R."/>
            <person name="Hirata M."/>
            <person name="Suto Y."/>
            <person name="Hirai M."/>
            <person name="Terao K."/>
            <person name="Sugano S."/>
            <person name="Hashimoto K."/>
        </authorList>
    </citation>
    <scope>NUCLEOTIDE SEQUENCE [LARGE SCALE MRNA]</scope>
    <source>
        <tissue>Testis</tissue>
    </source>
</reference>